<name>RK12_EUGGR</name>
<keyword id="KW-0150">Chloroplast</keyword>
<keyword id="KW-0934">Plastid</keyword>
<keyword id="KW-0687">Ribonucleoprotein</keyword>
<keyword id="KW-0689">Ribosomal protein</keyword>
<comment type="function">
    <text evidence="1">Forms part of the ribosomal stalk which helps the ribosome interact with GTP-bound translation factors. Is thus essential for accurate translation.</text>
</comment>
<comment type="subunit">
    <text evidence="1">Homodimer. Part of the ribosomal stalk of the 50S ribosomal subunit. Forms a multimeric L10(L12)X complex, where L10 forms an elongated spine to which 2 to 4 L12 dimers bind in a sequential fashion. Binds GTP-bound translation factors.</text>
</comment>
<comment type="subcellular location">
    <subcellularLocation>
        <location>Plastid</location>
        <location>Chloroplast</location>
    </subcellularLocation>
</comment>
<comment type="similarity">
    <text evidence="1">Belongs to the bacterial ribosomal protein bL12 family.</text>
</comment>
<feature type="chain" id="PRO_0000157617" description="Large ribosomal subunit protein bL12c">
    <location>
        <begin position="1"/>
        <end position="131"/>
    </location>
</feature>
<protein>
    <recommendedName>
        <fullName evidence="1">Large ribosomal subunit protein bL12c</fullName>
    </recommendedName>
    <alternativeName>
        <fullName evidence="2">50S ribosomal protein L12, chloroplastic</fullName>
    </alternativeName>
</protein>
<dbReference type="EMBL" id="X70810">
    <property type="protein sequence ID" value="CAA50119.1"/>
    <property type="molecule type" value="Genomic_DNA"/>
</dbReference>
<dbReference type="PIR" id="A59365">
    <property type="entry name" value="A59365"/>
</dbReference>
<dbReference type="RefSeq" id="NP_041932.1">
    <property type="nucleotide sequence ID" value="NC_001603.2"/>
</dbReference>
<dbReference type="SMR" id="P31915"/>
<dbReference type="GeneID" id="807528"/>
<dbReference type="GO" id="GO:0009507">
    <property type="term" value="C:chloroplast"/>
    <property type="evidence" value="ECO:0007669"/>
    <property type="project" value="UniProtKB-SubCell"/>
</dbReference>
<dbReference type="GO" id="GO:0022625">
    <property type="term" value="C:cytosolic large ribosomal subunit"/>
    <property type="evidence" value="ECO:0007669"/>
    <property type="project" value="TreeGrafter"/>
</dbReference>
<dbReference type="GO" id="GO:0003729">
    <property type="term" value="F:mRNA binding"/>
    <property type="evidence" value="ECO:0007669"/>
    <property type="project" value="TreeGrafter"/>
</dbReference>
<dbReference type="GO" id="GO:0003735">
    <property type="term" value="F:structural constituent of ribosome"/>
    <property type="evidence" value="ECO:0007669"/>
    <property type="project" value="InterPro"/>
</dbReference>
<dbReference type="GO" id="GO:0006412">
    <property type="term" value="P:translation"/>
    <property type="evidence" value="ECO:0007669"/>
    <property type="project" value="UniProtKB-UniRule"/>
</dbReference>
<dbReference type="CDD" id="cd00387">
    <property type="entry name" value="Ribosomal_L7_L12"/>
    <property type="match status" value="1"/>
</dbReference>
<dbReference type="FunFam" id="3.30.1390.10:FF:000001">
    <property type="entry name" value="50S ribosomal protein L7/L12"/>
    <property type="match status" value="1"/>
</dbReference>
<dbReference type="Gene3D" id="3.30.1390.10">
    <property type="match status" value="1"/>
</dbReference>
<dbReference type="Gene3D" id="1.20.5.710">
    <property type="entry name" value="Single helix bin"/>
    <property type="match status" value="1"/>
</dbReference>
<dbReference type="HAMAP" id="MF_00368">
    <property type="entry name" value="Ribosomal_bL12"/>
    <property type="match status" value="1"/>
</dbReference>
<dbReference type="InterPro" id="IPR000206">
    <property type="entry name" value="Ribosomal_bL12"/>
</dbReference>
<dbReference type="InterPro" id="IPR013823">
    <property type="entry name" value="Ribosomal_bL12_C"/>
</dbReference>
<dbReference type="InterPro" id="IPR014719">
    <property type="entry name" value="Ribosomal_bL12_C/ClpS-like"/>
</dbReference>
<dbReference type="InterPro" id="IPR008932">
    <property type="entry name" value="Ribosomal_bL12_oligo"/>
</dbReference>
<dbReference type="InterPro" id="IPR036235">
    <property type="entry name" value="Ribosomal_bL12_oligo_N_sf"/>
</dbReference>
<dbReference type="NCBIfam" id="TIGR00855">
    <property type="entry name" value="L12"/>
    <property type="match status" value="1"/>
</dbReference>
<dbReference type="PANTHER" id="PTHR45987">
    <property type="entry name" value="39S RIBOSOMAL PROTEIN L12"/>
    <property type="match status" value="1"/>
</dbReference>
<dbReference type="PANTHER" id="PTHR45987:SF4">
    <property type="entry name" value="LARGE RIBOSOMAL SUBUNIT PROTEIN BL12M"/>
    <property type="match status" value="1"/>
</dbReference>
<dbReference type="Pfam" id="PF00542">
    <property type="entry name" value="Ribosomal_L12"/>
    <property type="match status" value="1"/>
</dbReference>
<dbReference type="Pfam" id="PF16320">
    <property type="entry name" value="Ribosomal_L12_N"/>
    <property type="match status" value="1"/>
</dbReference>
<dbReference type="SUPFAM" id="SSF54736">
    <property type="entry name" value="ClpS-like"/>
    <property type="match status" value="1"/>
</dbReference>
<dbReference type="SUPFAM" id="SSF48300">
    <property type="entry name" value="Ribosomal protein L7/12, oligomerisation (N-terminal) domain"/>
    <property type="match status" value="1"/>
</dbReference>
<geneLocation type="chloroplast"/>
<accession>P31915</accession>
<reference key="1">
    <citation type="journal article" date="1993" name="Nucleic Acids Res.">
        <title>Complete sequence of Euglena gracilis chloroplast DNA.</title>
        <authorList>
            <person name="Hallick R.B."/>
            <person name="Hong L."/>
            <person name="Drager R.G."/>
            <person name="Favreau M.R."/>
            <person name="Monfort A."/>
            <person name="Orsat B."/>
            <person name="Spielmann A."/>
            <person name="Stutz E."/>
        </authorList>
    </citation>
    <scope>NUCLEOTIDE SEQUENCE [LARGE SCALE GENOMIC DNA]</scope>
    <source>
        <strain>Z / UTEX 753</strain>
    </source>
</reference>
<evidence type="ECO:0000255" key="1">
    <source>
        <dbReference type="HAMAP-Rule" id="MF_00368"/>
    </source>
</evidence>
<evidence type="ECO:0000305" key="2"/>
<proteinExistence type="inferred from homology"/>
<organism>
    <name type="scientific">Euglena gracilis</name>
    <dbReference type="NCBI Taxonomy" id="3039"/>
    <lineage>
        <taxon>Eukaryota</taxon>
        <taxon>Discoba</taxon>
        <taxon>Euglenozoa</taxon>
        <taxon>Euglenida</taxon>
        <taxon>Spirocuta</taxon>
        <taxon>Euglenophyceae</taxon>
        <taxon>Euglenales</taxon>
        <taxon>Euglenaceae</taxon>
        <taxon>Euglena</taxon>
    </lineage>
</organism>
<gene>
    <name evidence="1" type="primary">rpl12</name>
</gene>
<sequence length="131" mass="14371">MSTETDEILERLKKITLLEAYELVKQIENTFGVDATIALSASNTNPSILPSKADETVVEEKTEFDVIIQEVPSAKRINVIKTVRSLTTLGLKEAKDLIESVPKVVCEAVSKEVAEETKKLLEEAGASIIIK</sequence>